<protein>
    <recommendedName>
        <fullName>Protein phosphatase 1M</fullName>
        <ecNumber evidence="3">3.1.3.16</ecNumber>
    </recommendedName>
    <alternativeName>
        <fullName>Protein phosphatase 2C isoform eta</fullName>
        <shortName>PP2C-eta</shortName>
        <shortName>PP2CE</shortName>
    </alternativeName>
</protein>
<sequence>MSAGWFRRRFLPGEPLPAPRPPGPHASPVPYRRPRFLRGSSSSPGAADASRRPDSRPVRSPARGRTLPWNAGYAEIINAEKSEFNEDQAACGKLCIRRCEFGAEEEWLTLCPEEFLTGHYWALFDGHGGPAAAILAANTLHSCLRRQLEAVVEGLVATQPPMHLNGRCICPSDPQFVEEKGIRAEDLVIGALESAFQECDEVIGRELEASGQMGGCTALVAVSLQGKLYMANAGDSRAILVRRDEIRPLSFEFTPETERQRIQQLAFVYPELLAGEFTRLEFPRRLKGDDLGQKVLFRDHHMSGWSYKRVEKSDLKYPLIHGQGRQARLLGTLAVSRGLGDHQLRVLDTNIQLKPFLLSVPQVTVLDVDQLELQEDDVVVMATDGLWDVLSNEQVAWLVRSFLPGNQEDPHRFSKLAQMLIHSTQGKEDSLTEEGQVSYDDVSVFVIPLHSQGQESSDH</sequence>
<organism evidence="9">
    <name type="scientific">Homo sapiens</name>
    <name type="common">Human</name>
    <dbReference type="NCBI Taxonomy" id="9606"/>
    <lineage>
        <taxon>Eukaryota</taxon>
        <taxon>Metazoa</taxon>
        <taxon>Chordata</taxon>
        <taxon>Craniata</taxon>
        <taxon>Vertebrata</taxon>
        <taxon>Euteleostomi</taxon>
        <taxon>Mammalia</taxon>
        <taxon>Eutheria</taxon>
        <taxon>Euarchontoglires</taxon>
        <taxon>Primates</taxon>
        <taxon>Haplorrhini</taxon>
        <taxon>Catarrhini</taxon>
        <taxon>Hominidae</taxon>
        <taxon>Homo</taxon>
    </lineage>
</organism>
<comment type="catalytic activity">
    <reaction evidence="3">
        <text>O-phospho-L-seryl-[protein] + H2O = L-seryl-[protein] + phosphate</text>
        <dbReference type="Rhea" id="RHEA:20629"/>
        <dbReference type="Rhea" id="RHEA-COMP:9863"/>
        <dbReference type="Rhea" id="RHEA-COMP:11604"/>
        <dbReference type="ChEBI" id="CHEBI:15377"/>
        <dbReference type="ChEBI" id="CHEBI:29999"/>
        <dbReference type="ChEBI" id="CHEBI:43474"/>
        <dbReference type="ChEBI" id="CHEBI:83421"/>
        <dbReference type="EC" id="3.1.3.16"/>
    </reaction>
</comment>
<comment type="catalytic activity">
    <reaction evidence="3">
        <text>O-phospho-L-threonyl-[protein] + H2O = L-threonyl-[protein] + phosphate</text>
        <dbReference type="Rhea" id="RHEA:47004"/>
        <dbReference type="Rhea" id="RHEA-COMP:11060"/>
        <dbReference type="Rhea" id="RHEA-COMP:11605"/>
        <dbReference type="ChEBI" id="CHEBI:15377"/>
        <dbReference type="ChEBI" id="CHEBI:30013"/>
        <dbReference type="ChEBI" id="CHEBI:43474"/>
        <dbReference type="ChEBI" id="CHEBI:61977"/>
        <dbReference type="EC" id="3.1.3.16"/>
    </reaction>
</comment>
<comment type="cofactor">
    <cofactor evidence="3">
        <name>Mg(2+)</name>
        <dbReference type="ChEBI" id="CHEBI:18420"/>
    </cofactor>
    <cofactor evidence="3">
        <name>Mn(2+)</name>
        <dbReference type="ChEBI" id="CHEBI:29035"/>
    </cofactor>
    <text evidence="3">Binds 2 magnesium or manganese ions per subunit.</text>
</comment>
<comment type="subcellular location">
    <subcellularLocation>
        <location evidence="1">Nucleus</location>
    </subcellularLocation>
</comment>
<comment type="alternative products">
    <event type="alternative splicing"/>
    <isoform>
        <id>Q96MI6-5</id>
        <name>5</name>
        <sequence type="displayed"/>
    </isoform>
    <isoform>
        <id>Q96MI6-1</id>
        <name evidence="7">1</name>
        <sequence type="described" ref="VSP_061125 VSP_061126 VSP_061127"/>
    </isoform>
    <isoform>
        <id>Q96MI6-2</id>
        <name evidence="7">2</name>
        <sequence type="described" ref="VSP_050663 VSP_050664"/>
    </isoform>
    <isoform>
        <id>Q96MI6-3</id>
        <name evidence="7">3</name>
        <sequence type="described" ref="VSP_050660 VSP_050661"/>
    </isoform>
    <isoform>
        <id>Q96MI6-4</id>
        <name evidence="7">4</name>
        <sequence type="described" ref="VSP_050659"/>
    </isoform>
</comment>
<comment type="similarity">
    <text evidence="7">Belongs to the PP2C family.</text>
</comment>
<feature type="chain" id="PRO_0000057756" description="Protein phosphatase 1M">
    <location>
        <begin position="1"/>
        <end position="459"/>
    </location>
</feature>
<feature type="domain" description="PPM-type phosphatase" evidence="3">
    <location>
        <begin position="162"/>
        <end position="459"/>
    </location>
</feature>
<feature type="region of interest" description="Disordered" evidence="4">
    <location>
        <begin position="1"/>
        <end position="64"/>
    </location>
</feature>
<feature type="compositionally biased region" description="Basic residues" evidence="4">
    <location>
        <begin position="1"/>
        <end position="10"/>
    </location>
</feature>
<feature type="compositionally biased region" description="Pro residues" evidence="4">
    <location>
        <begin position="14"/>
        <end position="27"/>
    </location>
</feature>
<feature type="compositionally biased region" description="Low complexity" evidence="4">
    <location>
        <begin position="38"/>
        <end position="48"/>
    </location>
</feature>
<feature type="binding site" evidence="2">
    <location>
        <position position="125"/>
    </location>
    <ligand>
        <name>Mn(2+)</name>
        <dbReference type="ChEBI" id="CHEBI:29035"/>
        <label>1</label>
    </ligand>
</feature>
<feature type="binding site" evidence="2">
    <location>
        <position position="125"/>
    </location>
    <ligand>
        <name>Mn(2+)</name>
        <dbReference type="ChEBI" id="CHEBI:29035"/>
        <label>2</label>
    </ligand>
</feature>
<feature type="binding site" evidence="2">
    <location>
        <position position="126"/>
    </location>
    <ligand>
        <name>Mn(2+)</name>
        <dbReference type="ChEBI" id="CHEBI:29035"/>
        <label>1</label>
    </ligand>
</feature>
<feature type="splice variant" id="VSP_050660" description="In isoform 3." evidence="5">
    <location>
        <begin position="1"/>
        <end position="290"/>
    </location>
</feature>
<feature type="splice variant" id="VSP_050659" description="In isoform 4." evidence="6">
    <location>
        <begin position="1"/>
        <end position="212"/>
    </location>
</feature>
<feature type="splice variant" id="VSP_061125" description="In isoform 1.">
    <location>
        <begin position="1"/>
        <end position="161"/>
    </location>
</feature>
<feature type="splice variant" id="VSP_050663" description="In isoform 2." evidence="5">
    <original>AFVYPELLAGEFTRLEFPR</original>
    <variation>VGALGSMEAVKLQLLGPGP</variation>
    <location>
        <begin position="266"/>
        <end position="284"/>
    </location>
</feature>
<feature type="splice variant" id="VSP_050664" description="In isoform 2." evidence="5">
    <location>
        <begin position="285"/>
        <end position="459"/>
    </location>
</feature>
<feature type="splice variant" id="VSP_050661" description="In isoform 3." evidence="5">
    <original>LGQKVLFRDHHMSGW</original>
    <variation>MGHRAWVDAGSAPGR</variation>
    <location>
        <begin position="291"/>
        <end position="305"/>
    </location>
</feature>
<feature type="splice variant" id="VSP_061126" description="In isoform 1.">
    <original>FSKLAQMLIHSTQGKEDSL</original>
    <variation>YCSCWGPAWAWVGASSKPK</variation>
    <location>
        <begin position="413"/>
        <end position="431"/>
    </location>
</feature>
<feature type="splice variant" id="VSP_061127" description="In isoform 1.">
    <location>
        <begin position="432"/>
        <end position="459"/>
    </location>
</feature>
<evidence type="ECO:0000250" key="1"/>
<evidence type="ECO:0000250" key="2">
    <source>
        <dbReference type="UniProtKB" id="P35813"/>
    </source>
</evidence>
<evidence type="ECO:0000255" key="3">
    <source>
        <dbReference type="PROSITE-ProRule" id="PRU01082"/>
    </source>
</evidence>
<evidence type="ECO:0000256" key="4">
    <source>
        <dbReference type="SAM" id="MobiDB-lite"/>
    </source>
</evidence>
<evidence type="ECO:0000303" key="5">
    <source>
    </source>
</evidence>
<evidence type="ECO:0000303" key="6">
    <source>
    </source>
</evidence>
<evidence type="ECO:0000305" key="7"/>
<evidence type="ECO:0000312" key="8">
    <source>
        <dbReference type="EMBL" id="AAH09644.1"/>
    </source>
</evidence>
<evidence type="ECO:0000312" key="9">
    <source>
        <dbReference type="EMBL" id="BAB71302.1"/>
    </source>
</evidence>
<keyword id="KW-0025">Alternative splicing</keyword>
<keyword id="KW-0378">Hydrolase</keyword>
<keyword id="KW-0460">Magnesium</keyword>
<keyword id="KW-0464">Manganese</keyword>
<keyword id="KW-0479">Metal-binding</keyword>
<keyword id="KW-0539">Nucleus</keyword>
<keyword id="KW-0904">Protein phosphatase</keyword>
<keyword id="KW-1267">Proteomics identification</keyword>
<keyword id="KW-1185">Reference proteome</keyword>
<accession>Q96MI6</accession>
<accession>B7XGB9</accession>
<accession>F8W976</accession>
<accession>Q8N8J9</accession>
<accession>Q96DB8</accession>
<name>PPM1M_HUMAN</name>
<gene>
    <name type="primary">PPM1M</name>
    <name type="synonym">PPM1E</name>
</gene>
<proteinExistence type="evidence at protein level"/>
<dbReference type="EC" id="3.1.3.16" evidence="3"/>
<dbReference type="EMBL" id="AB474372">
    <property type="protein sequence ID" value="BAH03578.1"/>
    <property type="molecule type" value="mRNA"/>
</dbReference>
<dbReference type="EMBL" id="AK056894">
    <property type="protein sequence ID" value="BAB71302.1"/>
    <property type="molecule type" value="mRNA"/>
</dbReference>
<dbReference type="EMBL" id="AK096681">
    <property type="protein sequence ID" value="BAC04839.1"/>
    <property type="molecule type" value="mRNA"/>
</dbReference>
<dbReference type="EMBL" id="AK129647">
    <property type="protein sequence ID" value="BAC85206.1"/>
    <property type="molecule type" value="mRNA"/>
</dbReference>
<dbReference type="EMBL" id="AC006252">
    <property type="status" value="NOT_ANNOTATED_CDS"/>
    <property type="molecule type" value="Genomic_DNA"/>
</dbReference>
<dbReference type="EMBL" id="BC009644">
    <property type="protein sequence ID" value="AAH09644.1"/>
    <property type="molecule type" value="mRNA"/>
</dbReference>
<dbReference type="CCDS" id="CCDS46840.1">
    <molecule id="Q96MI6-4"/>
</dbReference>
<dbReference type="CCDS" id="CCDS93282.1">
    <molecule id="Q96MI6-5"/>
</dbReference>
<dbReference type="RefSeq" id="NP_001116342.1">
    <molecule id="Q96MI6-4"/>
    <property type="nucleotide sequence ID" value="NM_001122870.3"/>
</dbReference>
<dbReference type="RefSeq" id="NP_653242.3">
    <molecule id="Q96MI6-5"/>
    <property type="nucleotide sequence ID" value="NM_144641.4"/>
</dbReference>
<dbReference type="RefSeq" id="XP_054201258.1">
    <molecule id="Q96MI6-5"/>
    <property type="nucleotide sequence ID" value="XM_054345283.1"/>
</dbReference>
<dbReference type="SMR" id="Q96MI6"/>
<dbReference type="BioGRID" id="126308">
    <property type="interactions" value="64"/>
</dbReference>
<dbReference type="FunCoup" id="Q96MI6">
    <property type="interactions" value="917"/>
</dbReference>
<dbReference type="IntAct" id="Q96MI6">
    <property type="interactions" value="51"/>
</dbReference>
<dbReference type="MINT" id="Q96MI6"/>
<dbReference type="STRING" id="9606.ENSP00000387046"/>
<dbReference type="DEPOD" id="PPM1M"/>
<dbReference type="iPTMnet" id="Q96MI6"/>
<dbReference type="PhosphoSitePlus" id="Q96MI6"/>
<dbReference type="BioMuta" id="PPM1M"/>
<dbReference type="DMDM" id="41688718"/>
<dbReference type="MassIVE" id="Q96MI6"/>
<dbReference type="PaxDb" id="9606-ENSP00000387046"/>
<dbReference type="PeptideAtlas" id="Q96MI6"/>
<dbReference type="ProteomicsDB" id="30278"/>
<dbReference type="ProteomicsDB" id="6316"/>
<dbReference type="ProteomicsDB" id="77361">
    <molecule id="Q96MI6-1"/>
</dbReference>
<dbReference type="ProteomicsDB" id="77362">
    <molecule id="Q96MI6-2"/>
</dbReference>
<dbReference type="ProteomicsDB" id="77363">
    <molecule id="Q96MI6-3"/>
</dbReference>
<dbReference type="ProteomicsDB" id="77364">
    <molecule id="Q96MI6-4"/>
</dbReference>
<dbReference type="Antibodypedia" id="31173">
    <property type="antibodies" value="170 antibodies from 24 providers"/>
</dbReference>
<dbReference type="DNASU" id="132160"/>
<dbReference type="Ensembl" id="ENST00000296487.8">
    <molecule id="Q96MI6-1"/>
    <property type="protein sequence ID" value="ENSP00000296487.4"/>
    <property type="gene ID" value="ENSG00000164088.18"/>
</dbReference>
<dbReference type="Ensembl" id="ENST00000323588.9">
    <molecule id="Q96MI6-5"/>
    <property type="protein sequence ID" value="ENSP00000319894.5"/>
    <property type="gene ID" value="ENSG00000164088.18"/>
</dbReference>
<dbReference type="Ensembl" id="ENST00000409502.7">
    <molecule id="Q96MI6-4"/>
    <property type="protein sequence ID" value="ENSP00000387046.3"/>
    <property type="gene ID" value="ENSG00000164088.18"/>
</dbReference>
<dbReference type="GeneID" id="132160"/>
<dbReference type="KEGG" id="hsa:132160"/>
<dbReference type="MANE-Select" id="ENST00000323588.9">
    <property type="protein sequence ID" value="ENSP00000319894.5"/>
    <property type="RefSeq nucleotide sequence ID" value="NM_144641.4"/>
    <property type="RefSeq protein sequence ID" value="NP_653242.3"/>
</dbReference>
<dbReference type="UCSC" id="uc003ddf.4">
    <molecule id="Q96MI6-5"/>
    <property type="organism name" value="human"/>
</dbReference>
<dbReference type="UCSC" id="uc011bed.3">
    <property type="organism name" value="human"/>
</dbReference>
<dbReference type="AGR" id="HGNC:26506"/>
<dbReference type="CTD" id="132160"/>
<dbReference type="GeneCards" id="PPM1M"/>
<dbReference type="HGNC" id="HGNC:26506">
    <property type="gene designation" value="PPM1M"/>
</dbReference>
<dbReference type="HPA" id="ENSG00000164088">
    <property type="expression patterns" value="Low tissue specificity"/>
</dbReference>
<dbReference type="MIM" id="608979">
    <property type="type" value="gene"/>
</dbReference>
<dbReference type="neXtProt" id="NX_Q96MI6"/>
<dbReference type="OpenTargets" id="ENSG00000164088"/>
<dbReference type="PharmGKB" id="PA142671151"/>
<dbReference type="VEuPathDB" id="HostDB:ENSG00000164088"/>
<dbReference type="eggNOG" id="KOG1323">
    <property type="taxonomic scope" value="Eukaryota"/>
</dbReference>
<dbReference type="GeneTree" id="ENSGT00940000161084"/>
<dbReference type="HOGENOM" id="CLU_029072_2_0_1"/>
<dbReference type="InParanoid" id="Q96MI6"/>
<dbReference type="OMA" id="CNKEVAH"/>
<dbReference type="OrthoDB" id="416093at2759"/>
<dbReference type="PAN-GO" id="Q96MI6">
    <property type="GO annotations" value="1 GO annotation based on evolutionary models"/>
</dbReference>
<dbReference type="PhylomeDB" id="Q96MI6"/>
<dbReference type="TreeFam" id="TF314700"/>
<dbReference type="PathwayCommons" id="Q96MI6"/>
<dbReference type="SignaLink" id="Q96MI6"/>
<dbReference type="BioGRID-ORCS" id="132160">
    <property type="hits" value="8 hits in 1174 CRISPR screens"/>
</dbReference>
<dbReference type="ChiTaRS" id="PPM1M">
    <property type="organism name" value="human"/>
</dbReference>
<dbReference type="GenomeRNAi" id="132160"/>
<dbReference type="Pharos" id="Q96MI6">
    <property type="development level" value="Tbio"/>
</dbReference>
<dbReference type="PRO" id="PR:Q96MI6"/>
<dbReference type="Proteomes" id="UP000005640">
    <property type="component" value="Chromosome 3"/>
</dbReference>
<dbReference type="RNAct" id="Q96MI6">
    <property type="molecule type" value="protein"/>
</dbReference>
<dbReference type="Bgee" id="ENSG00000164088">
    <property type="expression patterns" value="Expressed in granulocyte and 143 other cell types or tissues"/>
</dbReference>
<dbReference type="ExpressionAtlas" id="Q96MI6">
    <property type="expression patterns" value="baseline and differential"/>
</dbReference>
<dbReference type="GO" id="GO:0005739">
    <property type="term" value="C:mitochondrion"/>
    <property type="evidence" value="ECO:0000318"/>
    <property type="project" value="GO_Central"/>
</dbReference>
<dbReference type="GO" id="GO:0005634">
    <property type="term" value="C:nucleus"/>
    <property type="evidence" value="ECO:0000250"/>
    <property type="project" value="UniProtKB"/>
</dbReference>
<dbReference type="GO" id="GO:0004741">
    <property type="term" value="F:[pyruvate dehydrogenase (acetyl-transferring)]-phosphatase activity"/>
    <property type="evidence" value="ECO:0000318"/>
    <property type="project" value="GO_Central"/>
</dbReference>
<dbReference type="GO" id="GO:0030145">
    <property type="term" value="F:manganese ion binding"/>
    <property type="evidence" value="ECO:0000250"/>
    <property type="project" value="UniProtKB"/>
</dbReference>
<dbReference type="GO" id="GO:0006470">
    <property type="term" value="P:protein dephosphorylation"/>
    <property type="evidence" value="ECO:0000250"/>
    <property type="project" value="UniProtKB"/>
</dbReference>
<dbReference type="GO" id="GO:0007165">
    <property type="term" value="P:signal transduction"/>
    <property type="evidence" value="ECO:0000318"/>
    <property type="project" value="GO_Central"/>
</dbReference>
<dbReference type="CDD" id="cd00143">
    <property type="entry name" value="PP2Cc"/>
    <property type="match status" value="1"/>
</dbReference>
<dbReference type="Gene3D" id="3.60.40.10">
    <property type="entry name" value="PPM-type phosphatase domain"/>
    <property type="match status" value="1"/>
</dbReference>
<dbReference type="InterPro" id="IPR015655">
    <property type="entry name" value="PP2C"/>
</dbReference>
<dbReference type="InterPro" id="IPR036457">
    <property type="entry name" value="PPM-type-like_dom_sf"/>
</dbReference>
<dbReference type="InterPro" id="IPR001932">
    <property type="entry name" value="PPM-type_phosphatase-like_dom"/>
</dbReference>
<dbReference type="PANTHER" id="PTHR13832:SF236">
    <property type="entry name" value="PROTEIN PHOSPHATASE 1M"/>
    <property type="match status" value="1"/>
</dbReference>
<dbReference type="PANTHER" id="PTHR13832">
    <property type="entry name" value="PROTEIN PHOSPHATASE 2C"/>
    <property type="match status" value="1"/>
</dbReference>
<dbReference type="Pfam" id="PF00481">
    <property type="entry name" value="PP2C"/>
    <property type="match status" value="2"/>
</dbReference>
<dbReference type="SMART" id="SM00332">
    <property type="entry name" value="PP2Cc"/>
    <property type="match status" value="1"/>
</dbReference>
<dbReference type="SUPFAM" id="SSF81606">
    <property type="entry name" value="PP2C-like"/>
    <property type="match status" value="1"/>
</dbReference>
<dbReference type="PROSITE" id="PS51746">
    <property type="entry name" value="PPM_2"/>
    <property type="match status" value="1"/>
</dbReference>
<reference key="1">
    <citation type="journal article" date="2009" name="Biochem. J.">
        <title>A mechanism for the suppression of interleukin-1-induced nuclear factor kappaB activation by protein phosphatase 2Ceta-2.</title>
        <authorList>
            <person name="Henmi T."/>
            <person name="Amano K."/>
            <person name="Nagaura Y."/>
            <person name="Matsumoto K."/>
            <person name="Echigo S."/>
            <person name="Tamura S."/>
            <person name="Kobayashi T."/>
        </authorList>
    </citation>
    <scope>NUCLEOTIDE SEQUENCE [MRNA] (ISOFORM 5)</scope>
</reference>
<reference key="2">
    <citation type="journal article" date="2004" name="Nat. Genet.">
        <title>Complete sequencing and characterization of 21,243 full-length human cDNAs.</title>
        <authorList>
            <person name="Ota T."/>
            <person name="Suzuki Y."/>
            <person name="Nishikawa T."/>
            <person name="Otsuki T."/>
            <person name="Sugiyama T."/>
            <person name="Irie R."/>
            <person name="Wakamatsu A."/>
            <person name="Hayashi K."/>
            <person name="Sato H."/>
            <person name="Nagai K."/>
            <person name="Kimura K."/>
            <person name="Makita H."/>
            <person name="Sekine M."/>
            <person name="Obayashi M."/>
            <person name="Nishi T."/>
            <person name="Shibahara T."/>
            <person name="Tanaka T."/>
            <person name="Ishii S."/>
            <person name="Yamamoto J."/>
            <person name="Saito K."/>
            <person name="Kawai Y."/>
            <person name="Isono Y."/>
            <person name="Nakamura Y."/>
            <person name="Nagahari K."/>
            <person name="Murakami K."/>
            <person name="Yasuda T."/>
            <person name="Iwayanagi T."/>
            <person name="Wagatsuma M."/>
            <person name="Shiratori A."/>
            <person name="Sudo H."/>
            <person name="Hosoiri T."/>
            <person name="Kaku Y."/>
            <person name="Kodaira H."/>
            <person name="Kondo H."/>
            <person name="Sugawara M."/>
            <person name="Takahashi M."/>
            <person name="Kanda K."/>
            <person name="Yokoi T."/>
            <person name="Furuya T."/>
            <person name="Kikkawa E."/>
            <person name="Omura Y."/>
            <person name="Abe K."/>
            <person name="Kamihara K."/>
            <person name="Katsuta N."/>
            <person name="Sato K."/>
            <person name="Tanikawa M."/>
            <person name="Yamazaki M."/>
            <person name="Ninomiya K."/>
            <person name="Ishibashi T."/>
            <person name="Yamashita H."/>
            <person name="Murakawa K."/>
            <person name="Fujimori K."/>
            <person name="Tanai H."/>
            <person name="Kimata M."/>
            <person name="Watanabe M."/>
            <person name="Hiraoka S."/>
            <person name="Chiba Y."/>
            <person name="Ishida S."/>
            <person name="Ono Y."/>
            <person name="Takiguchi S."/>
            <person name="Watanabe S."/>
            <person name="Yosida M."/>
            <person name="Hotuta T."/>
            <person name="Kusano J."/>
            <person name="Kanehori K."/>
            <person name="Takahashi-Fujii A."/>
            <person name="Hara H."/>
            <person name="Tanase T.-O."/>
            <person name="Nomura Y."/>
            <person name="Togiya S."/>
            <person name="Komai F."/>
            <person name="Hara R."/>
            <person name="Takeuchi K."/>
            <person name="Arita M."/>
            <person name="Imose N."/>
            <person name="Musashino K."/>
            <person name="Yuuki H."/>
            <person name="Oshima A."/>
            <person name="Sasaki N."/>
            <person name="Aotsuka S."/>
            <person name="Yoshikawa Y."/>
            <person name="Matsunawa H."/>
            <person name="Ichihara T."/>
            <person name="Shiohata N."/>
            <person name="Sano S."/>
            <person name="Moriya S."/>
            <person name="Momiyama H."/>
            <person name="Satoh N."/>
            <person name="Takami S."/>
            <person name="Terashima Y."/>
            <person name="Suzuki O."/>
            <person name="Nakagawa S."/>
            <person name="Senoh A."/>
            <person name="Mizoguchi H."/>
            <person name="Goto Y."/>
            <person name="Shimizu F."/>
            <person name="Wakebe H."/>
            <person name="Hishigaki H."/>
            <person name="Watanabe T."/>
            <person name="Sugiyama A."/>
            <person name="Takemoto M."/>
            <person name="Kawakami B."/>
            <person name="Yamazaki M."/>
            <person name="Watanabe K."/>
            <person name="Kumagai A."/>
            <person name="Itakura S."/>
            <person name="Fukuzumi Y."/>
            <person name="Fujimori Y."/>
            <person name="Komiyama M."/>
            <person name="Tashiro H."/>
            <person name="Tanigami A."/>
            <person name="Fujiwara T."/>
            <person name="Ono T."/>
            <person name="Yamada K."/>
            <person name="Fujii Y."/>
            <person name="Ozaki K."/>
            <person name="Hirao M."/>
            <person name="Ohmori Y."/>
            <person name="Kawabata A."/>
            <person name="Hikiji T."/>
            <person name="Kobatake N."/>
            <person name="Inagaki H."/>
            <person name="Ikema Y."/>
            <person name="Okamoto S."/>
            <person name="Okitani R."/>
            <person name="Kawakami T."/>
            <person name="Noguchi S."/>
            <person name="Itoh T."/>
            <person name="Shigeta K."/>
            <person name="Senba T."/>
            <person name="Matsumura K."/>
            <person name="Nakajima Y."/>
            <person name="Mizuno T."/>
            <person name="Morinaga M."/>
            <person name="Sasaki M."/>
            <person name="Togashi T."/>
            <person name="Oyama M."/>
            <person name="Hata H."/>
            <person name="Watanabe M."/>
            <person name="Komatsu T."/>
            <person name="Mizushima-Sugano J."/>
            <person name="Satoh T."/>
            <person name="Shirai Y."/>
            <person name="Takahashi Y."/>
            <person name="Nakagawa K."/>
            <person name="Okumura K."/>
            <person name="Nagase T."/>
            <person name="Nomura N."/>
            <person name="Kikuchi H."/>
            <person name="Masuho Y."/>
            <person name="Yamashita R."/>
            <person name="Nakai K."/>
            <person name="Yada T."/>
            <person name="Nakamura Y."/>
            <person name="Ohara O."/>
            <person name="Isogai T."/>
            <person name="Sugano S."/>
        </authorList>
    </citation>
    <scope>NUCLEOTIDE SEQUENCE [MRNA] (ISOFORMS 1; 3 AND 4)</scope>
    <scope>NUCLEOTIDE SEQUENCE [LARGE SCALE MRNA] OF 26-459 (ISOFORM 2)</scope>
    <source>
        <tissue>Peripheral blood</tissue>
        <tissue>Prostate</tissue>
        <tissue>Thymus</tissue>
    </source>
</reference>
<reference key="3">
    <citation type="journal article" date="2006" name="Nature">
        <title>The DNA sequence, annotation and analysis of human chromosome 3.</title>
        <authorList>
            <person name="Muzny D.M."/>
            <person name="Scherer S.E."/>
            <person name="Kaul R."/>
            <person name="Wang J."/>
            <person name="Yu J."/>
            <person name="Sudbrak R."/>
            <person name="Buhay C.J."/>
            <person name="Chen R."/>
            <person name="Cree A."/>
            <person name="Ding Y."/>
            <person name="Dugan-Rocha S."/>
            <person name="Gill R."/>
            <person name="Gunaratne P."/>
            <person name="Harris R.A."/>
            <person name="Hawes A.C."/>
            <person name="Hernandez J."/>
            <person name="Hodgson A.V."/>
            <person name="Hume J."/>
            <person name="Jackson A."/>
            <person name="Khan Z.M."/>
            <person name="Kovar-Smith C."/>
            <person name="Lewis L.R."/>
            <person name="Lozado R.J."/>
            <person name="Metzker M.L."/>
            <person name="Milosavljevic A."/>
            <person name="Miner G.R."/>
            <person name="Morgan M.B."/>
            <person name="Nazareth L.V."/>
            <person name="Scott G."/>
            <person name="Sodergren E."/>
            <person name="Song X.-Z."/>
            <person name="Steffen D."/>
            <person name="Wei S."/>
            <person name="Wheeler D.A."/>
            <person name="Wright M.W."/>
            <person name="Worley K.C."/>
            <person name="Yuan Y."/>
            <person name="Zhang Z."/>
            <person name="Adams C.Q."/>
            <person name="Ansari-Lari M.A."/>
            <person name="Ayele M."/>
            <person name="Brown M.J."/>
            <person name="Chen G."/>
            <person name="Chen Z."/>
            <person name="Clendenning J."/>
            <person name="Clerc-Blankenburg K.P."/>
            <person name="Chen R."/>
            <person name="Chen Z."/>
            <person name="Davis C."/>
            <person name="Delgado O."/>
            <person name="Dinh H.H."/>
            <person name="Dong W."/>
            <person name="Draper H."/>
            <person name="Ernst S."/>
            <person name="Fu G."/>
            <person name="Gonzalez-Garay M.L."/>
            <person name="Garcia D.K."/>
            <person name="Gillett W."/>
            <person name="Gu J."/>
            <person name="Hao B."/>
            <person name="Haugen E."/>
            <person name="Havlak P."/>
            <person name="He X."/>
            <person name="Hennig S."/>
            <person name="Hu S."/>
            <person name="Huang W."/>
            <person name="Jackson L.R."/>
            <person name="Jacob L.S."/>
            <person name="Kelly S.H."/>
            <person name="Kube M."/>
            <person name="Levy R."/>
            <person name="Li Z."/>
            <person name="Liu B."/>
            <person name="Liu J."/>
            <person name="Liu W."/>
            <person name="Lu J."/>
            <person name="Maheshwari M."/>
            <person name="Nguyen B.-V."/>
            <person name="Okwuonu G.O."/>
            <person name="Palmeiri A."/>
            <person name="Pasternak S."/>
            <person name="Perez L.M."/>
            <person name="Phelps K.A."/>
            <person name="Plopper F.J."/>
            <person name="Qiang B."/>
            <person name="Raymond C."/>
            <person name="Rodriguez R."/>
            <person name="Saenphimmachak C."/>
            <person name="Santibanez J."/>
            <person name="Shen H."/>
            <person name="Shen Y."/>
            <person name="Subramanian S."/>
            <person name="Tabor P.E."/>
            <person name="Verduzco D."/>
            <person name="Waldron L."/>
            <person name="Wang J."/>
            <person name="Wang J."/>
            <person name="Wang Q."/>
            <person name="Williams G.A."/>
            <person name="Wong G.K.-S."/>
            <person name="Yao Z."/>
            <person name="Zhang J."/>
            <person name="Zhang X."/>
            <person name="Zhao G."/>
            <person name="Zhou J."/>
            <person name="Zhou Y."/>
            <person name="Nelson D."/>
            <person name="Lehrach H."/>
            <person name="Reinhardt R."/>
            <person name="Naylor S.L."/>
            <person name="Yang H."/>
            <person name="Olson M."/>
            <person name="Weinstock G."/>
            <person name="Gibbs R.A."/>
        </authorList>
    </citation>
    <scope>NUCLEOTIDE SEQUENCE [LARGE SCALE GENOMIC DNA]</scope>
</reference>
<reference evidence="7" key="4">
    <citation type="journal article" date="2004" name="Genome Res.">
        <title>The status, quality, and expansion of the NIH full-length cDNA project: the Mammalian Gene Collection (MGC).</title>
        <authorList>
            <consortium name="The MGC Project Team"/>
        </authorList>
    </citation>
    <scope>NUCLEOTIDE SEQUENCE [LARGE SCALE MRNA] (ISOFORM 4)</scope>
    <source>
        <tissue evidence="8">Uterus</tissue>
    </source>
</reference>